<name>RPOY_LISMC</name>
<comment type="function">
    <text evidence="1">A non-essential component of RNA polymerase (RNAP).</text>
</comment>
<comment type="catalytic activity">
    <reaction evidence="1">
        <text>RNA(n) + a ribonucleoside 5'-triphosphate = RNA(n+1) + diphosphate</text>
        <dbReference type="Rhea" id="RHEA:21248"/>
        <dbReference type="Rhea" id="RHEA-COMP:14527"/>
        <dbReference type="Rhea" id="RHEA-COMP:17342"/>
        <dbReference type="ChEBI" id="CHEBI:33019"/>
        <dbReference type="ChEBI" id="CHEBI:61557"/>
        <dbReference type="ChEBI" id="CHEBI:140395"/>
        <dbReference type="EC" id="2.7.7.6"/>
    </reaction>
</comment>
<comment type="subunit">
    <text evidence="1">RNAP is composed of a core of 2 alpha, a beta and a beta' subunit. The core is associated with a delta subunit, and at least one of epsilon or omega. When a sigma factor is associated with the core the holoenzyme is formed, which can initiate transcription.</text>
</comment>
<comment type="similarity">
    <text evidence="1">Belongs to the RNA polymerase subunit epsilon family.</text>
</comment>
<organism>
    <name type="scientific">Listeria monocytogenes serotype 4b (strain CLIP80459)</name>
    <dbReference type="NCBI Taxonomy" id="568819"/>
    <lineage>
        <taxon>Bacteria</taxon>
        <taxon>Bacillati</taxon>
        <taxon>Bacillota</taxon>
        <taxon>Bacilli</taxon>
        <taxon>Bacillales</taxon>
        <taxon>Listeriaceae</taxon>
        <taxon>Listeria</taxon>
    </lineage>
</organism>
<dbReference type="EC" id="2.7.7.6" evidence="1"/>
<dbReference type="EMBL" id="FM242711">
    <property type="protein sequence ID" value="CAS04814.1"/>
    <property type="molecule type" value="Genomic_DNA"/>
</dbReference>
<dbReference type="RefSeq" id="WP_003722652.1">
    <property type="nucleotide sequence ID" value="NC_012488.1"/>
</dbReference>
<dbReference type="SMR" id="C1L1U9"/>
<dbReference type="KEGG" id="lmc:Lm4b_01048"/>
<dbReference type="HOGENOM" id="CLU_187518_0_0_9"/>
<dbReference type="GO" id="GO:0000428">
    <property type="term" value="C:DNA-directed RNA polymerase complex"/>
    <property type="evidence" value="ECO:0007669"/>
    <property type="project" value="UniProtKB-KW"/>
</dbReference>
<dbReference type="GO" id="GO:0003677">
    <property type="term" value="F:DNA binding"/>
    <property type="evidence" value="ECO:0007669"/>
    <property type="project" value="UniProtKB-UniRule"/>
</dbReference>
<dbReference type="GO" id="GO:0003899">
    <property type="term" value="F:DNA-directed RNA polymerase activity"/>
    <property type="evidence" value="ECO:0007669"/>
    <property type="project" value="UniProtKB-UniRule"/>
</dbReference>
<dbReference type="GO" id="GO:0006351">
    <property type="term" value="P:DNA-templated transcription"/>
    <property type="evidence" value="ECO:0007669"/>
    <property type="project" value="UniProtKB-UniRule"/>
</dbReference>
<dbReference type="Gene3D" id="3.10.20.730">
    <property type="entry name" value="RNAP, epsilon subunit-like"/>
    <property type="match status" value="1"/>
</dbReference>
<dbReference type="HAMAP" id="MF_01553">
    <property type="entry name" value="RNApol_bact_RpoY"/>
    <property type="match status" value="1"/>
</dbReference>
<dbReference type="InterPro" id="IPR009907">
    <property type="entry name" value="RpoY"/>
</dbReference>
<dbReference type="NCBIfam" id="NF010188">
    <property type="entry name" value="PRK13667.1"/>
    <property type="match status" value="1"/>
</dbReference>
<dbReference type="Pfam" id="PF07288">
    <property type="entry name" value="RpoY"/>
    <property type="match status" value="1"/>
</dbReference>
<reference key="1">
    <citation type="journal article" date="2012" name="BMC Genomics">
        <title>Comparative genomics and transcriptomics of lineages I, II, and III strains of Listeria monocytogenes.</title>
        <authorList>
            <person name="Hain T."/>
            <person name="Ghai R."/>
            <person name="Billion A."/>
            <person name="Kuenne C.T."/>
            <person name="Steinweg C."/>
            <person name="Izar B."/>
            <person name="Mohamed W."/>
            <person name="Mraheil M."/>
            <person name="Domann E."/>
            <person name="Schaffrath S."/>
            <person name="Karst U."/>
            <person name="Goesmann A."/>
            <person name="Oehm S."/>
            <person name="Puhler A."/>
            <person name="Merkl R."/>
            <person name="Vorwerk S."/>
            <person name="Glaser P."/>
            <person name="Garrido P."/>
            <person name="Rusniok C."/>
            <person name="Buchrieser C."/>
            <person name="Goebel W."/>
            <person name="Chakraborty T."/>
        </authorList>
    </citation>
    <scope>NUCLEOTIDE SEQUENCE [LARGE SCALE GENOMIC DNA]</scope>
    <source>
        <strain>CLIP80459</strain>
    </source>
</reference>
<feature type="chain" id="PRO_1000215480" description="DNA-directed RNA polymerase subunit epsilon">
    <location>
        <begin position="1"/>
        <end position="69"/>
    </location>
</feature>
<sequence length="69" mass="8292">MIFKVFYQETLTETPVREKTQSLYVEAESEVKVRQLLKDEPFHIEFVEKISDAHLAYEKENPDFALWEK</sequence>
<protein>
    <recommendedName>
        <fullName evidence="1">DNA-directed RNA polymerase subunit epsilon</fullName>
        <shortName evidence="1">RNAP epsilon subunit</shortName>
        <ecNumber evidence="1">2.7.7.6</ecNumber>
    </recommendedName>
    <alternativeName>
        <fullName evidence="1">RNA polymerase epsilon subunit</fullName>
    </alternativeName>
    <alternativeName>
        <fullName evidence="1">Transcriptase subunit epsilon</fullName>
    </alternativeName>
</protein>
<proteinExistence type="inferred from homology"/>
<keyword id="KW-0240">DNA-directed RNA polymerase</keyword>
<keyword id="KW-0548">Nucleotidyltransferase</keyword>
<keyword id="KW-0804">Transcription</keyword>
<keyword id="KW-0808">Transferase</keyword>
<evidence type="ECO:0000255" key="1">
    <source>
        <dbReference type="HAMAP-Rule" id="MF_01553"/>
    </source>
</evidence>
<accession>C1L1U9</accession>
<gene>
    <name evidence="1" type="primary">rpoY</name>
    <name type="ordered locus">Lm4b_01048</name>
</gene>